<keyword id="KW-0002">3D-structure</keyword>
<keyword id="KW-0007">Acetylation</keyword>
<keyword id="KW-0963">Cytoplasm</keyword>
<keyword id="KW-0903">Direct protein sequencing</keyword>
<keyword id="KW-0358">Heparin-binding</keyword>
<keyword id="KW-0488">Methylation</keyword>
<keyword id="KW-0597">Phosphoprotein</keyword>
<keyword id="KW-1267">Proteomics identification</keyword>
<keyword id="KW-1185">Reference proteome</keyword>
<keyword id="KW-0677">Repeat</keyword>
<keyword id="KW-0687">Ribonucleoprotein</keyword>
<keyword id="KW-0689">Ribosomal protein</keyword>
<sequence>MAKSKNHTTHNQSRKWHRNGIKKPRSQRYESLKGVDPKFLRNMRFAKKHNKKGLKKMQANNAKAMSARAEAIKALVKPKEVKPKIPKGVSRKLDRLAYIAHPKLGKRARARIAKGLRLCRPKAKAKAKAKDQTKAQAAAPASVPAQAPKRTQAPTKASE</sequence>
<organism>
    <name type="scientific">Homo sapiens</name>
    <name type="common">Human</name>
    <dbReference type="NCBI Taxonomy" id="9606"/>
    <lineage>
        <taxon>Eukaryota</taxon>
        <taxon>Metazoa</taxon>
        <taxon>Chordata</taxon>
        <taxon>Craniata</taxon>
        <taxon>Vertebrata</taxon>
        <taxon>Euteleostomi</taxon>
        <taxon>Mammalia</taxon>
        <taxon>Eutheria</taxon>
        <taxon>Euarchontoglires</taxon>
        <taxon>Primates</taxon>
        <taxon>Haplorrhini</taxon>
        <taxon>Catarrhini</taxon>
        <taxon>Hominidae</taxon>
        <taxon>Homo</taxon>
    </lineage>
</organism>
<reference key="1">
    <citation type="submission" date="1994-06" db="EMBL/GenBank/DDBJ databases">
        <authorList>
            <person name="Law P.T."/>
            <person name="Tsui S.K."/>
            <person name="Lee C.Y."/>
            <person name="Waye M.M."/>
        </authorList>
    </citation>
    <scope>NUCLEOTIDE SEQUENCE [MRNA]</scope>
</reference>
<reference key="2">
    <citation type="journal article" date="1996" name="Biochim. Biophys. Acta">
        <title>A novel cDNA encoding a human homologue of ribosomal protein L29.</title>
        <authorList>
            <person name="Law P.T."/>
            <person name="Tsui S.K.W."/>
            <person name="Lam W.Y."/>
            <person name="Luk S.C."/>
            <person name="Hwang D.M."/>
            <person name="Liew C.C."/>
            <person name="Lee C.-Y."/>
            <person name="Fung K.-P."/>
            <person name="Waye M.M.Y."/>
        </authorList>
    </citation>
    <scope>NUCLEOTIDE SEQUENCE [MRNA]</scope>
</reference>
<reference key="3">
    <citation type="journal article" date="1996" name="J. Biol. Chem.">
        <title>cDNA cloning and expression of HIP, a novel cell surface heparan sulfate/heparin-binding protein of human uterine epithelial cells and cell lines.</title>
        <authorList>
            <person name="Liu S."/>
            <person name="Smith S.E."/>
            <person name="Julian J."/>
            <person name="Rohde L.H."/>
            <person name="Karin N.J."/>
            <person name="Carson D.D."/>
        </authorList>
    </citation>
    <scope>NUCLEOTIDE SEQUENCE [MRNA]</scope>
</reference>
<reference key="4">
    <citation type="journal article" date="2004" name="Nat. Genet.">
        <title>Complete sequencing and characterization of 21,243 full-length human cDNAs.</title>
        <authorList>
            <person name="Ota T."/>
            <person name="Suzuki Y."/>
            <person name="Nishikawa T."/>
            <person name="Otsuki T."/>
            <person name="Sugiyama T."/>
            <person name="Irie R."/>
            <person name="Wakamatsu A."/>
            <person name="Hayashi K."/>
            <person name="Sato H."/>
            <person name="Nagai K."/>
            <person name="Kimura K."/>
            <person name="Makita H."/>
            <person name="Sekine M."/>
            <person name="Obayashi M."/>
            <person name="Nishi T."/>
            <person name="Shibahara T."/>
            <person name="Tanaka T."/>
            <person name="Ishii S."/>
            <person name="Yamamoto J."/>
            <person name="Saito K."/>
            <person name="Kawai Y."/>
            <person name="Isono Y."/>
            <person name="Nakamura Y."/>
            <person name="Nagahari K."/>
            <person name="Murakami K."/>
            <person name="Yasuda T."/>
            <person name="Iwayanagi T."/>
            <person name="Wagatsuma M."/>
            <person name="Shiratori A."/>
            <person name="Sudo H."/>
            <person name="Hosoiri T."/>
            <person name="Kaku Y."/>
            <person name="Kodaira H."/>
            <person name="Kondo H."/>
            <person name="Sugawara M."/>
            <person name="Takahashi M."/>
            <person name="Kanda K."/>
            <person name="Yokoi T."/>
            <person name="Furuya T."/>
            <person name="Kikkawa E."/>
            <person name="Omura Y."/>
            <person name="Abe K."/>
            <person name="Kamihara K."/>
            <person name="Katsuta N."/>
            <person name="Sato K."/>
            <person name="Tanikawa M."/>
            <person name="Yamazaki M."/>
            <person name="Ninomiya K."/>
            <person name="Ishibashi T."/>
            <person name="Yamashita H."/>
            <person name="Murakawa K."/>
            <person name="Fujimori K."/>
            <person name="Tanai H."/>
            <person name="Kimata M."/>
            <person name="Watanabe M."/>
            <person name="Hiraoka S."/>
            <person name="Chiba Y."/>
            <person name="Ishida S."/>
            <person name="Ono Y."/>
            <person name="Takiguchi S."/>
            <person name="Watanabe S."/>
            <person name="Yosida M."/>
            <person name="Hotuta T."/>
            <person name="Kusano J."/>
            <person name="Kanehori K."/>
            <person name="Takahashi-Fujii A."/>
            <person name="Hara H."/>
            <person name="Tanase T.-O."/>
            <person name="Nomura Y."/>
            <person name="Togiya S."/>
            <person name="Komai F."/>
            <person name="Hara R."/>
            <person name="Takeuchi K."/>
            <person name="Arita M."/>
            <person name="Imose N."/>
            <person name="Musashino K."/>
            <person name="Yuuki H."/>
            <person name="Oshima A."/>
            <person name="Sasaki N."/>
            <person name="Aotsuka S."/>
            <person name="Yoshikawa Y."/>
            <person name="Matsunawa H."/>
            <person name="Ichihara T."/>
            <person name="Shiohata N."/>
            <person name="Sano S."/>
            <person name="Moriya S."/>
            <person name="Momiyama H."/>
            <person name="Satoh N."/>
            <person name="Takami S."/>
            <person name="Terashima Y."/>
            <person name="Suzuki O."/>
            <person name="Nakagawa S."/>
            <person name="Senoh A."/>
            <person name="Mizoguchi H."/>
            <person name="Goto Y."/>
            <person name="Shimizu F."/>
            <person name="Wakebe H."/>
            <person name="Hishigaki H."/>
            <person name="Watanabe T."/>
            <person name="Sugiyama A."/>
            <person name="Takemoto M."/>
            <person name="Kawakami B."/>
            <person name="Yamazaki M."/>
            <person name="Watanabe K."/>
            <person name="Kumagai A."/>
            <person name="Itakura S."/>
            <person name="Fukuzumi Y."/>
            <person name="Fujimori Y."/>
            <person name="Komiyama M."/>
            <person name="Tashiro H."/>
            <person name="Tanigami A."/>
            <person name="Fujiwara T."/>
            <person name="Ono T."/>
            <person name="Yamada K."/>
            <person name="Fujii Y."/>
            <person name="Ozaki K."/>
            <person name="Hirao M."/>
            <person name="Ohmori Y."/>
            <person name="Kawabata A."/>
            <person name="Hikiji T."/>
            <person name="Kobatake N."/>
            <person name="Inagaki H."/>
            <person name="Ikema Y."/>
            <person name="Okamoto S."/>
            <person name="Okitani R."/>
            <person name="Kawakami T."/>
            <person name="Noguchi S."/>
            <person name="Itoh T."/>
            <person name="Shigeta K."/>
            <person name="Senba T."/>
            <person name="Matsumura K."/>
            <person name="Nakajima Y."/>
            <person name="Mizuno T."/>
            <person name="Morinaga M."/>
            <person name="Sasaki M."/>
            <person name="Togashi T."/>
            <person name="Oyama M."/>
            <person name="Hata H."/>
            <person name="Watanabe M."/>
            <person name="Komatsu T."/>
            <person name="Mizushima-Sugano J."/>
            <person name="Satoh T."/>
            <person name="Shirai Y."/>
            <person name="Takahashi Y."/>
            <person name="Nakagawa K."/>
            <person name="Okumura K."/>
            <person name="Nagase T."/>
            <person name="Nomura N."/>
            <person name="Kikuchi H."/>
            <person name="Masuho Y."/>
            <person name="Yamashita R."/>
            <person name="Nakai K."/>
            <person name="Yada T."/>
            <person name="Nakamura Y."/>
            <person name="Ohara O."/>
            <person name="Isogai T."/>
            <person name="Sugano S."/>
        </authorList>
    </citation>
    <scope>NUCLEOTIDE SEQUENCE [LARGE SCALE MRNA]</scope>
    <source>
        <tissue>Brain</tissue>
        <tissue>Cerebellum</tissue>
    </source>
</reference>
<reference key="5">
    <citation type="journal article" date="2004" name="Genome Res.">
        <title>The status, quality, and expansion of the NIH full-length cDNA project: the Mammalian Gene Collection (MGC).</title>
        <authorList>
            <consortium name="The MGC Project Team"/>
        </authorList>
    </citation>
    <scope>NUCLEOTIDE SEQUENCE [LARGE SCALE MRNA]</scope>
    <source>
        <tissue>Ovary</tissue>
        <tissue>Pancreas</tissue>
    </source>
</reference>
<reference key="6">
    <citation type="journal article" date="2003" name="J. Protein Chem.">
        <title>Characterization and analysis of posttranslational modifications of the human large cytoplasmic ribosomal subunit proteins by mass spectrometry and Edman sequencing.</title>
        <authorList>
            <person name="Odintsova T.I."/>
            <person name="Muller E.C."/>
            <person name="Ivanov A.V."/>
            <person name="Egorov T.A."/>
            <person name="Bienert R."/>
            <person name="Vladimirov S.N."/>
            <person name="Kostka S."/>
            <person name="Otto A."/>
            <person name="Wittmann-Liebold B."/>
            <person name="Karpova G.G."/>
        </authorList>
    </citation>
    <scope>PROTEIN SEQUENCE OF 2-15</scope>
    <scope>IDENTIFICATION BY MASS SPECTROMETRY</scope>
    <scope>METHYLATION AT LYS-5</scope>
    <scope>FUNCTION</scope>
    <scope>SUBUNIT</scope>
</reference>
<reference key="7">
    <citation type="journal article" date="2003" name="Nature">
        <title>Proteomic characterization of the human centrosome by protein correlation profiling.</title>
        <authorList>
            <person name="Andersen J.S."/>
            <person name="Wilkinson C.J."/>
            <person name="Mayor T."/>
            <person name="Mortensen P."/>
            <person name="Nigg E.A."/>
            <person name="Mann M."/>
        </authorList>
    </citation>
    <scope>IDENTIFICATION BY MASS SPECTROMETRY</scope>
    <source>
        <tissue>Lymphoblast</tissue>
    </source>
</reference>
<reference key="8">
    <citation type="journal article" date="2009" name="Science">
        <title>Lysine acetylation targets protein complexes and co-regulates major cellular functions.</title>
        <authorList>
            <person name="Choudhary C."/>
            <person name="Kumar C."/>
            <person name="Gnad F."/>
            <person name="Nielsen M.L."/>
            <person name="Rehman M."/>
            <person name="Walther T.C."/>
            <person name="Olsen J.V."/>
            <person name="Mann M."/>
        </authorList>
    </citation>
    <scope>ACETYLATION [LARGE SCALE ANALYSIS] AT LYS-33</scope>
    <scope>IDENTIFICATION BY MASS SPECTROMETRY [LARGE SCALE ANALYSIS]</scope>
</reference>
<reference key="9">
    <citation type="journal article" date="2010" name="Sci. Signal.">
        <title>Quantitative phosphoproteomics reveals widespread full phosphorylation site occupancy during mitosis.</title>
        <authorList>
            <person name="Olsen J.V."/>
            <person name="Vermeulen M."/>
            <person name="Santamaria A."/>
            <person name="Kumar C."/>
            <person name="Miller M.L."/>
            <person name="Jensen L.J."/>
            <person name="Gnad F."/>
            <person name="Cox J."/>
            <person name="Jensen T.S."/>
            <person name="Nigg E.A."/>
            <person name="Brunak S."/>
            <person name="Mann M."/>
        </authorList>
    </citation>
    <scope>PHOSPHORYLATION [LARGE SCALE ANALYSIS] AT SER-142</scope>
    <scope>IDENTIFICATION BY MASS SPECTROMETRY [LARGE SCALE ANALYSIS]</scope>
    <source>
        <tissue>Cervix carcinoma</tissue>
    </source>
</reference>
<reference key="10">
    <citation type="journal article" date="2011" name="BMC Syst. Biol.">
        <title>Initial characterization of the human central proteome.</title>
        <authorList>
            <person name="Burkard T.R."/>
            <person name="Planyavsky M."/>
            <person name="Kaupe I."/>
            <person name="Breitwieser F.P."/>
            <person name="Buerckstuemmer T."/>
            <person name="Bennett K.L."/>
            <person name="Superti-Furga G."/>
            <person name="Colinge J."/>
        </authorList>
    </citation>
    <scope>IDENTIFICATION BY MASS SPECTROMETRY [LARGE SCALE ANALYSIS]</scope>
</reference>
<reference key="11">
    <citation type="journal article" date="2012" name="Proc. Natl. Acad. Sci. U.S.A.">
        <title>N-terminal acetylome analyses and functional insights of the N-terminal acetyltransferase NatB.</title>
        <authorList>
            <person name="Van Damme P."/>
            <person name="Lasa M."/>
            <person name="Polevoda B."/>
            <person name="Gazquez C."/>
            <person name="Elosegui-Artola A."/>
            <person name="Kim D.S."/>
            <person name="De Juan-Pardo E."/>
            <person name="Demeyer K."/>
            <person name="Hole K."/>
            <person name="Larrea E."/>
            <person name="Timmerman E."/>
            <person name="Prieto J."/>
            <person name="Arnesen T."/>
            <person name="Sherman F."/>
            <person name="Gevaert K."/>
            <person name="Aldabe R."/>
        </authorList>
    </citation>
    <scope>IDENTIFICATION BY MASS SPECTROMETRY [LARGE SCALE ANALYSIS]</scope>
</reference>
<reference key="12">
    <citation type="journal article" date="2013" name="J. Proteome Res.">
        <title>Toward a comprehensive characterization of a human cancer cell phosphoproteome.</title>
        <authorList>
            <person name="Zhou H."/>
            <person name="Di Palma S."/>
            <person name="Preisinger C."/>
            <person name="Peng M."/>
            <person name="Polat A.N."/>
            <person name="Heck A.J."/>
            <person name="Mohammed S."/>
        </authorList>
    </citation>
    <scope>PHOSPHORYLATION [LARGE SCALE ANALYSIS] AT SER-31 AND SER-142</scope>
    <scope>IDENTIFICATION BY MASS SPECTROMETRY [LARGE SCALE ANALYSIS]</scope>
    <source>
        <tissue>Cervix carcinoma</tissue>
        <tissue>Erythroleukemia</tissue>
    </source>
</reference>
<reference key="13">
    <citation type="journal article" date="2014" name="Curr. Opin. Struct. Biol.">
        <title>A new system for naming ribosomal proteins.</title>
        <authorList>
            <person name="Ban N."/>
            <person name="Beckmann R."/>
            <person name="Cate J.H.D."/>
            <person name="Dinman J.D."/>
            <person name="Dragon F."/>
            <person name="Ellis S.R."/>
            <person name="Lafontaine D.L.J."/>
            <person name="Lindahl L."/>
            <person name="Liljas A."/>
            <person name="Lipton J.M."/>
            <person name="McAlear M.A."/>
            <person name="Moore P.B."/>
            <person name="Noller H.F."/>
            <person name="Ortega J."/>
            <person name="Panse V.G."/>
            <person name="Ramakrishnan V."/>
            <person name="Spahn C.M.T."/>
            <person name="Steitz T.A."/>
            <person name="Tchorzewski M."/>
            <person name="Tollervey D."/>
            <person name="Warren A.J."/>
            <person name="Williamson J.R."/>
            <person name="Wilson D."/>
            <person name="Yonath A."/>
            <person name="Yusupov M."/>
        </authorList>
    </citation>
    <scope>NOMENCLATURE</scope>
</reference>
<reference key="14">
    <citation type="journal article" date="2014" name="J. Proteomics">
        <title>An enzyme assisted RP-RPLC approach for in-depth analysis of human liver phosphoproteome.</title>
        <authorList>
            <person name="Bian Y."/>
            <person name="Song C."/>
            <person name="Cheng K."/>
            <person name="Dong M."/>
            <person name="Wang F."/>
            <person name="Huang J."/>
            <person name="Sun D."/>
            <person name="Wang L."/>
            <person name="Ye M."/>
            <person name="Zou H."/>
        </authorList>
    </citation>
    <scope>PHOSPHORYLATION [LARGE SCALE ANALYSIS] AT SER-142</scope>
    <scope>IDENTIFICATION BY MASS SPECTROMETRY [LARGE SCALE ANALYSIS]</scope>
    <source>
        <tissue>Liver</tissue>
    </source>
</reference>
<reference key="15">
    <citation type="journal article" date="2014" name="Mol. Cell. Proteomics">
        <title>Immunoaffinity enrichment and mass spectrometry analysis of protein methylation.</title>
        <authorList>
            <person name="Guo A."/>
            <person name="Gu H."/>
            <person name="Zhou J."/>
            <person name="Mulhern D."/>
            <person name="Wang Y."/>
            <person name="Lee K.A."/>
            <person name="Yang V."/>
            <person name="Aguiar M."/>
            <person name="Kornhauser J."/>
            <person name="Jia X."/>
            <person name="Ren J."/>
            <person name="Beausoleil S.A."/>
            <person name="Silva J.C."/>
            <person name="Vemulapalli V."/>
            <person name="Bedford M.T."/>
            <person name="Comb M.J."/>
        </authorList>
    </citation>
    <scope>METHYLATION [LARGE SCALE ANALYSIS] AT LYS-5</scope>
    <scope>IDENTIFICATION BY MASS SPECTROMETRY [LARGE SCALE ANALYSIS]</scope>
    <source>
        <tissue>Colon carcinoma</tissue>
    </source>
</reference>
<reference key="16">
    <citation type="journal article" date="2015" name="Proteomics">
        <title>N-terminome analysis of the human mitochondrial proteome.</title>
        <authorList>
            <person name="Vaca Jacome A.S."/>
            <person name="Rabilloud T."/>
            <person name="Schaeffer-Reiss C."/>
            <person name="Rompais M."/>
            <person name="Ayoub D."/>
            <person name="Lane L."/>
            <person name="Bairoch A."/>
            <person name="Van Dorsselaer A."/>
            <person name="Carapito C."/>
        </authorList>
    </citation>
    <scope>IDENTIFICATION BY MASS SPECTROMETRY [LARGE SCALE ANALYSIS]</scope>
</reference>
<reference key="17">
    <citation type="journal article" date="2013" name="Nature">
        <title>Structures of the human and Drosophila 80S ribosome.</title>
        <authorList>
            <person name="Anger A.M."/>
            <person name="Armache J.P."/>
            <person name="Berninghausen O."/>
            <person name="Habeck M."/>
            <person name="Subklewe M."/>
            <person name="Wilson D.N."/>
            <person name="Beckmann R."/>
        </authorList>
    </citation>
    <scope>STRUCTURE BY ELECTRON MICROSCOPY (5.0 ANGSTROMS)</scope>
    <scope>FUNCTION</scope>
    <scope>SUBUNIT</scope>
    <scope>SUBCELLULAR LOCATION</scope>
</reference>
<reference evidence="8 9 10 11" key="18">
    <citation type="journal article" date="2020" name="Nat. Commun.">
        <title>Structural snapshots of human pre-60S ribosomal particles before and after nuclear export.</title>
        <authorList>
            <person name="Liang X."/>
            <person name="Zuo M.Q."/>
            <person name="Zhang Y."/>
            <person name="Li N."/>
            <person name="Ma C."/>
            <person name="Dong M.Q."/>
            <person name="Gao N."/>
        </authorList>
    </citation>
    <scope>STRUCTURE BY ELECTRON MICROSCOPY (3.09 ANGSTROMS)</scope>
    <scope>FUNCTION</scope>
    <scope>SUBUNIT</scope>
</reference>
<dbReference type="EMBL" id="U10248">
    <property type="protein sequence ID" value="AAC50499.1"/>
    <property type="molecule type" value="mRNA"/>
</dbReference>
<dbReference type="EMBL" id="Z49148">
    <property type="protein sequence ID" value="CAA89008.1"/>
    <property type="molecule type" value="mRNA"/>
</dbReference>
<dbReference type="EMBL" id="U49083">
    <property type="protein sequence ID" value="AAC50647.1"/>
    <property type="molecule type" value="mRNA"/>
</dbReference>
<dbReference type="EMBL" id="AK289538">
    <property type="protein sequence ID" value="BAF82227.1"/>
    <property type="molecule type" value="mRNA"/>
</dbReference>
<dbReference type="EMBL" id="AK311884">
    <property type="protein sequence ID" value="BAG34825.1"/>
    <property type="molecule type" value="mRNA"/>
</dbReference>
<dbReference type="EMBL" id="BC008926">
    <property type="protein sequence ID" value="AAH08926.1"/>
    <property type="molecule type" value="mRNA"/>
</dbReference>
<dbReference type="EMBL" id="BC070190">
    <property type="protein sequence ID" value="AAH70190.1"/>
    <property type="molecule type" value="mRNA"/>
</dbReference>
<dbReference type="EMBL" id="BC070481">
    <property type="protein sequence ID" value="AAH70481.1"/>
    <property type="molecule type" value="mRNA"/>
</dbReference>
<dbReference type="EMBL" id="BC071663">
    <property type="protein sequence ID" value="AAH71663.1"/>
    <property type="molecule type" value="mRNA"/>
</dbReference>
<dbReference type="CCDS" id="CCDS2845.1"/>
<dbReference type="PIR" id="S65784">
    <property type="entry name" value="S65784"/>
</dbReference>
<dbReference type="RefSeq" id="NP_000983.1">
    <property type="nucleotide sequence ID" value="NM_000992.3"/>
</dbReference>
<dbReference type="PDB" id="4UG0">
    <property type="method" value="EM"/>
    <property type="chains" value="Lb=1-159"/>
</dbReference>
<dbReference type="PDB" id="4V6X">
    <property type="method" value="EM"/>
    <property type="resolution" value="5.00 A"/>
    <property type="chains" value="Cb=1-159"/>
</dbReference>
<dbReference type="PDB" id="5AJ0">
    <property type="method" value="EM"/>
    <property type="resolution" value="3.50 A"/>
    <property type="chains" value="Ab=1-159"/>
</dbReference>
<dbReference type="PDB" id="5T2C">
    <property type="method" value="EM"/>
    <property type="resolution" value="3.60 A"/>
    <property type="chains" value="V=1-159"/>
</dbReference>
<dbReference type="PDB" id="6IP5">
    <property type="method" value="EM"/>
    <property type="resolution" value="3.90 A"/>
    <property type="chains" value="2V=1-159"/>
</dbReference>
<dbReference type="PDB" id="6IP6">
    <property type="method" value="EM"/>
    <property type="resolution" value="4.50 A"/>
    <property type="chains" value="2V=1-159"/>
</dbReference>
<dbReference type="PDB" id="6IP8">
    <property type="method" value="EM"/>
    <property type="resolution" value="3.90 A"/>
    <property type="chains" value="2V=1-159"/>
</dbReference>
<dbReference type="PDB" id="6LQM">
    <property type="method" value="EM"/>
    <property type="resolution" value="3.09 A"/>
    <property type="chains" value="C=1-159"/>
</dbReference>
<dbReference type="PDB" id="6LSR">
    <property type="method" value="EM"/>
    <property type="resolution" value="3.13 A"/>
    <property type="chains" value="C=1-159"/>
</dbReference>
<dbReference type="PDB" id="6LSS">
    <property type="method" value="EM"/>
    <property type="resolution" value="3.23 A"/>
    <property type="chains" value="C=1-159"/>
</dbReference>
<dbReference type="PDB" id="6LU8">
    <property type="method" value="EM"/>
    <property type="resolution" value="3.13 A"/>
    <property type="chains" value="C=1-159"/>
</dbReference>
<dbReference type="PDB" id="6OLE">
    <property type="method" value="EM"/>
    <property type="resolution" value="3.10 A"/>
    <property type="chains" value="c=2-122"/>
</dbReference>
<dbReference type="PDB" id="6OLF">
    <property type="method" value="EM"/>
    <property type="resolution" value="3.90 A"/>
    <property type="chains" value="c=2-122"/>
</dbReference>
<dbReference type="PDB" id="6OLG">
    <property type="method" value="EM"/>
    <property type="resolution" value="3.40 A"/>
    <property type="chains" value="Ab=2-122"/>
</dbReference>
<dbReference type="PDB" id="6OLI">
    <property type="method" value="EM"/>
    <property type="resolution" value="3.50 A"/>
    <property type="chains" value="c=2-122"/>
</dbReference>
<dbReference type="PDB" id="6OLZ">
    <property type="method" value="EM"/>
    <property type="resolution" value="3.90 A"/>
    <property type="chains" value="Ab=2-119"/>
</dbReference>
<dbReference type="PDB" id="6OM0">
    <property type="method" value="EM"/>
    <property type="resolution" value="3.10 A"/>
    <property type="chains" value="c=2-122"/>
</dbReference>
<dbReference type="PDB" id="6OM7">
    <property type="method" value="EM"/>
    <property type="resolution" value="3.70 A"/>
    <property type="chains" value="c=2-122"/>
</dbReference>
<dbReference type="PDB" id="6QZP">
    <property type="method" value="EM"/>
    <property type="resolution" value="2.90 A"/>
    <property type="chains" value="Lb=2-122"/>
</dbReference>
<dbReference type="PDB" id="6W6L">
    <property type="method" value="EM"/>
    <property type="resolution" value="3.84 A"/>
    <property type="chains" value="c=1-159"/>
</dbReference>
<dbReference type="PDB" id="6XA1">
    <property type="method" value="EM"/>
    <property type="resolution" value="2.80 A"/>
    <property type="chains" value="Lb=2-122"/>
</dbReference>
<dbReference type="PDB" id="6Y0G">
    <property type="method" value="EM"/>
    <property type="resolution" value="3.20 A"/>
    <property type="chains" value="Lb=1-159"/>
</dbReference>
<dbReference type="PDB" id="6Y2L">
    <property type="method" value="EM"/>
    <property type="resolution" value="3.00 A"/>
    <property type="chains" value="Lb=1-159"/>
</dbReference>
<dbReference type="PDB" id="6Y57">
    <property type="method" value="EM"/>
    <property type="resolution" value="3.50 A"/>
    <property type="chains" value="Lb=1-159"/>
</dbReference>
<dbReference type="PDB" id="6Y6X">
    <property type="method" value="EM"/>
    <property type="resolution" value="2.80 A"/>
    <property type="chains" value="Lb=2-122"/>
</dbReference>
<dbReference type="PDB" id="6Z6L">
    <property type="method" value="EM"/>
    <property type="resolution" value="3.00 A"/>
    <property type="chains" value="Lb=1-159"/>
</dbReference>
<dbReference type="PDB" id="6Z6M">
    <property type="method" value="EM"/>
    <property type="resolution" value="3.10 A"/>
    <property type="chains" value="Lb=1-159"/>
</dbReference>
<dbReference type="PDB" id="6Z6N">
    <property type="method" value="EM"/>
    <property type="resolution" value="2.90 A"/>
    <property type="chains" value="Lb=1-159"/>
</dbReference>
<dbReference type="PDB" id="6ZM7">
    <property type="method" value="EM"/>
    <property type="resolution" value="2.70 A"/>
    <property type="chains" value="Lb=1-159"/>
</dbReference>
<dbReference type="PDB" id="6ZME">
    <property type="method" value="EM"/>
    <property type="resolution" value="3.00 A"/>
    <property type="chains" value="Lb=1-159"/>
</dbReference>
<dbReference type="PDB" id="6ZMI">
    <property type="method" value="EM"/>
    <property type="resolution" value="2.60 A"/>
    <property type="chains" value="Lb=1-159"/>
</dbReference>
<dbReference type="PDB" id="6ZMO">
    <property type="method" value="EM"/>
    <property type="resolution" value="3.10 A"/>
    <property type="chains" value="Lb=1-159"/>
</dbReference>
<dbReference type="PDB" id="7BHP">
    <property type="method" value="EM"/>
    <property type="resolution" value="3.30 A"/>
    <property type="chains" value="Lb=1-159"/>
</dbReference>
<dbReference type="PDB" id="7F5S">
    <property type="method" value="EM"/>
    <property type="resolution" value="2.72 A"/>
    <property type="chains" value="Lb=1-159"/>
</dbReference>
<dbReference type="PDB" id="7OW7">
    <property type="method" value="EM"/>
    <property type="resolution" value="2.20 A"/>
    <property type="chains" value="V=1-159"/>
</dbReference>
<dbReference type="PDB" id="7QVP">
    <property type="method" value="EM"/>
    <property type="resolution" value="3.00 A"/>
    <property type="chains" value="Lb/Mb=1-159"/>
</dbReference>
<dbReference type="PDB" id="7XNX">
    <property type="method" value="EM"/>
    <property type="resolution" value="2.70 A"/>
    <property type="chains" value="Lb=1-159"/>
</dbReference>
<dbReference type="PDB" id="7XNY">
    <property type="method" value="EM"/>
    <property type="resolution" value="2.50 A"/>
    <property type="chains" value="Lb=1-159"/>
</dbReference>
<dbReference type="PDB" id="8A3D">
    <property type="method" value="EM"/>
    <property type="resolution" value="1.67 A"/>
    <property type="chains" value="V=1-159"/>
</dbReference>
<dbReference type="PDB" id="8FL6">
    <property type="method" value="EM"/>
    <property type="resolution" value="2.62 A"/>
    <property type="chains" value="LM=1-159"/>
</dbReference>
<dbReference type="PDB" id="8FL7">
    <property type="method" value="EM"/>
    <property type="resolution" value="2.55 A"/>
    <property type="chains" value="LM=1-159"/>
</dbReference>
<dbReference type="PDB" id="8FL9">
    <property type="method" value="EM"/>
    <property type="resolution" value="2.75 A"/>
    <property type="chains" value="LM=1-159"/>
</dbReference>
<dbReference type="PDB" id="8FLA">
    <property type="method" value="EM"/>
    <property type="resolution" value="2.63 A"/>
    <property type="chains" value="LM=1-159"/>
</dbReference>
<dbReference type="PDB" id="8FLB">
    <property type="method" value="EM"/>
    <property type="resolution" value="2.55 A"/>
    <property type="chains" value="LM=1-159"/>
</dbReference>
<dbReference type="PDB" id="8FLC">
    <property type="method" value="EM"/>
    <property type="resolution" value="2.76 A"/>
    <property type="chains" value="LM=1-159"/>
</dbReference>
<dbReference type="PDB" id="8FLD">
    <property type="method" value="EM"/>
    <property type="resolution" value="2.58 A"/>
    <property type="chains" value="LM=1-159"/>
</dbReference>
<dbReference type="PDB" id="8FLE">
    <property type="method" value="EM"/>
    <property type="resolution" value="2.48 A"/>
    <property type="chains" value="LM=1-159"/>
</dbReference>
<dbReference type="PDB" id="8FLF">
    <property type="method" value="EM"/>
    <property type="resolution" value="2.65 A"/>
    <property type="chains" value="LM=1-159"/>
</dbReference>
<dbReference type="PDB" id="8G5Y">
    <property type="method" value="EM"/>
    <property type="resolution" value="2.29 A"/>
    <property type="chains" value="Lb=1-159"/>
</dbReference>
<dbReference type="PDB" id="8G60">
    <property type="method" value="EM"/>
    <property type="resolution" value="2.54 A"/>
    <property type="chains" value="Lb=1-159"/>
</dbReference>
<dbReference type="PDB" id="8G61">
    <property type="method" value="EM"/>
    <property type="resolution" value="2.94 A"/>
    <property type="chains" value="Lb=1-159"/>
</dbReference>
<dbReference type="PDB" id="8G6J">
    <property type="method" value="EM"/>
    <property type="resolution" value="2.80 A"/>
    <property type="chains" value="Lb=1-159"/>
</dbReference>
<dbReference type="PDB" id="8GLP">
    <property type="method" value="EM"/>
    <property type="resolution" value="1.67 A"/>
    <property type="chains" value="Lb=1-159"/>
</dbReference>
<dbReference type="PDB" id="8IDT">
    <property type="method" value="EM"/>
    <property type="resolution" value="2.80 A"/>
    <property type="chains" value="C=1-159"/>
</dbReference>
<dbReference type="PDB" id="8IDY">
    <property type="method" value="EM"/>
    <property type="resolution" value="3.00 A"/>
    <property type="chains" value="C=1-159"/>
</dbReference>
<dbReference type="PDB" id="8IE3">
    <property type="method" value="EM"/>
    <property type="resolution" value="3.30 A"/>
    <property type="chains" value="C=1-159"/>
</dbReference>
<dbReference type="PDB" id="8IFD">
    <property type="method" value="EM"/>
    <property type="resolution" value="2.59 A"/>
    <property type="chains" value="2V=1-159"/>
</dbReference>
<dbReference type="PDB" id="8IFE">
    <property type="method" value="EM"/>
    <property type="resolution" value="2.57 A"/>
    <property type="chains" value="2V=1-159"/>
</dbReference>
<dbReference type="PDB" id="8INE">
    <property type="method" value="EM"/>
    <property type="resolution" value="3.20 A"/>
    <property type="chains" value="C=1-159"/>
</dbReference>
<dbReference type="PDB" id="8INF">
    <property type="method" value="EM"/>
    <property type="resolution" value="3.00 A"/>
    <property type="chains" value="C=1-159"/>
</dbReference>
<dbReference type="PDB" id="8INK">
    <property type="method" value="EM"/>
    <property type="resolution" value="3.20 A"/>
    <property type="chains" value="A=1-159"/>
</dbReference>
<dbReference type="PDB" id="8IPD">
    <property type="method" value="EM"/>
    <property type="resolution" value="3.20 A"/>
    <property type="chains" value="A=1-159"/>
</dbReference>
<dbReference type="PDB" id="8IPX">
    <property type="method" value="EM"/>
    <property type="resolution" value="4.30 A"/>
    <property type="chains" value="A=1-159"/>
</dbReference>
<dbReference type="PDB" id="8IPY">
    <property type="method" value="EM"/>
    <property type="resolution" value="3.20 A"/>
    <property type="chains" value="A=1-159"/>
</dbReference>
<dbReference type="PDB" id="8JDJ">
    <property type="method" value="EM"/>
    <property type="resolution" value="2.50 A"/>
    <property type="chains" value="g=1-159"/>
</dbReference>
<dbReference type="PDB" id="8JDK">
    <property type="method" value="EM"/>
    <property type="resolution" value="2.26 A"/>
    <property type="chains" value="g=1-159"/>
</dbReference>
<dbReference type="PDB" id="8JDL">
    <property type="method" value="EM"/>
    <property type="resolution" value="2.42 A"/>
    <property type="chains" value="g=1-159"/>
</dbReference>
<dbReference type="PDB" id="8JDM">
    <property type="method" value="EM"/>
    <property type="resolution" value="2.67 A"/>
    <property type="chains" value="g=1-159"/>
</dbReference>
<dbReference type="PDB" id="8K2C">
    <property type="method" value="EM"/>
    <property type="resolution" value="2.40 A"/>
    <property type="chains" value="Lb=1-159"/>
</dbReference>
<dbReference type="PDB" id="8OHD">
    <property type="method" value="EM"/>
    <property type="resolution" value="3.10 A"/>
    <property type="chains" value="Lb=1-159"/>
</dbReference>
<dbReference type="PDB" id="8OJ0">
    <property type="method" value="EM"/>
    <property type="resolution" value="3.30 A"/>
    <property type="chains" value="Lb=1-159"/>
</dbReference>
<dbReference type="PDB" id="8OJ5">
    <property type="method" value="EM"/>
    <property type="resolution" value="2.90 A"/>
    <property type="chains" value="Lb=1-159"/>
</dbReference>
<dbReference type="PDB" id="8OJ8">
    <property type="method" value="EM"/>
    <property type="resolution" value="3.30 A"/>
    <property type="chains" value="Lb=1-159"/>
</dbReference>
<dbReference type="PDB" id="8QFD">
    <property type="method" value="EM"/>
    <property type="resolution" value="2.20 A"/>
    <property type="chains" value="b=1-159"/>
</dbReference>
<dbReference type="PDB" id="8QOI">
    <property type="method" value="EM"/>
    <property type="resolution" value="1.90 A"/>
    <property type="chains" value="Lb=1-159"/>
</dbReference>
<dbReference type="PDB" id="8QYX">
    <property type="method" value="EM"/>
    <property type="resolution" value="1.78 A"/>
    <property type="chains" value="V1=1-159"/>
</dbReference>
<dbReference type="PDB" id="8UKB">
    <property type="method" value="EM"/>
    <property type="resolution" value="3.05 A"/>
    <property type="chains" value="Lb=2-122"/>
</dbReference>
<dbReference type="PDB" id="8XSX">
    <property type="method" value="EM"/>
    <property type="resolution" value="2.40 A"/>
    <property type="chains" value="Lb=1-159"/>
</dbReference>
<dbReference type="PDB" id="8XSY">
    <property type="method" value="EM"/>
    <property type="resolution" value="3.00 A"/>
    <property type="chains" value="Lb=1-159"/>
</dbReference>
<dbReference type="PDB" id="8XSZ">
    <property type="method" value="EM"/>
    <property type="resolution" value="3.20 A"/>
    <property type="chains" value="Lb=1-159"/>
</dbReference>
<dbReference type="PDB" id="8Y0W">
    <property type="method" value="EM"/>
    <property type="resolution" value="3.40 A"/>
    <property type="chains" value="Lb=1-159"/>
</dbReference>
<dbReference type="PDB" id="8Y0X">
    <property type="method" value="EM"/>
    <property type="resolution" value="3.30 A"/>
    <property type="chains" value="Lb=1-159"/>
</dbReference>
<dbReference type="PDB" id="8YOO">
    <property type="method" value="EM"/>
    <property type="resolution" value="2.00 A"/>
    <property type="chains" value="Lb=1-159"/>
</dbReference>
<dbReference type="PDB" id="8YOP">
    <property type="method" value="EM"/>
    <property type="resolution" value="2.20 A"/>
    <property type="chains" value="Lb=1-159"/>
</dbReference>
<dbReference type="PDB" id="9C3H">
    <property type="method" value="EM"/>
    <property type="resolution" value="2.00 A"/>
    <property type="chains" value="Lb=1-159"/>
</dbReference>
<dbReference type="PDB" id="9G8M">
    <property type="method" value="EM"/>
    <property type="resolution" value="3.30 A"/>
    <property type="chains" value="Lb=1-159"/>
</dbReference>
<dbReference type="PDB" id="9GMO">
    <property type="method" value="EM"/>
    <property type="resolution" value="2.59 A"/>
    <property type="chains" value="V=1-159"/>
</dbReference>
<dbReference type="PDBsum" id="4UG0"/>
<dbReference type="PDBsum" id="4V6X"/>
<dbReference type="PDBsum" id="5AJ0"/>
<dbReference type="PDBsum" id="5T2C"/>
<dbReference type="PDBsum" id="6IP5"/>
<dbReference type="PDBsum" id="6IP6"/>
<dbReference type="PDBsum" id="6IP8"/>
<dbReference type="PDBsum" id="6LQM"/>
<dbReference type="PDBsum" id="6LSR"/>
<dbReference type="PDBsum" id="6LSS"/>
<dbReference type="PDBsum" id="6LU8"/>
<dbReference type="PDBsum" id="6OLE"/>
<dbReference type="PDBsum" id="6OLF"/>
<dbReference type="PDBsum" id="6OLG"/>
<dbReference type="PDBsum" id="6OLI"/>
<dbReference type="PDBsum" id="6OLZ"/>
<dbReference type="PDBsum" id="6OM0"/>
<dbReference type="PDBsum" id="6OM7"/>
<dbReference type="PDBsum" id="6QZP"/>
<dbReference type="PDBsum" id="6W6L"/>
<dbReference type="PDBsum" id="6XA1"/>
<dbReference type="PDBsum" id="6Y0G"/>
<dbReference type="PDBsum" id="6Y2L"/>
<dbReference type="PDBsum" id="6Y57"/>
<dbReference type="PDBsum" id="6Y6X"/>
<dbReference type="PDBsum" id="6Z6L"/>
<dbReference type="PDBsum" id="6Z6M"/>
<dbReference type="PDBsum" id="6Z6N"/>
<dbReference type="PDBsum" id="6ZM7"/>
<dbReference type="PDBsum" id="6ZME"/>
<dbReference type="PDBsum" id="6ZMI"/>
<dbReference type="PDBsum" id="6ZMO"/>
<dbReference type="PDBsum" id="7BHP"/>
<dbReference type="PDBsum" id="7F5S"/>
<dbReference type="PDBsum" id="7OW7"/>
<dbReference type="PDBsum" id="7QVP"/>
<dbReference type="PDBsum" id="7XNX"/>
<dbReference type="PDBsum" id="7XNY"/>
<dbReference type="PDBsum" id="8A3D"/>
<dbReference type="PDBsum" id="8FL6"/>
<dbReference type="PDBsum" id="8FL7"/>
<dbReference type="PDBsum" id="8FL9"/>
<dbReference type="PDBsum" id="8FLA"/>
<dbReference type="PDBsum" id="8FLB"/>
<dbReference type="PDBsum" id="8FLC"/>
<dbReference type="PDBsum" id="8FLD"/>
<dbReference type="PDBsum" id="8FLE"/>
<dbReference type="PDBsum" id="8FLF"/>
<dbReference type="PDBsum" id="8G5Y"/>
<dbReference type="PDBsum" id="8G60"/>
<dbReference type="PDBsum" id="8G61"/>
<dbReference type="PDBsum" id="8G6J"/>
<dbReference type="PDBsum" id="8GLP"/>
<dbReference type="PDBsum" id="8IDT"/>
<dbReference type="PDBsum" id="8IDY"/>
<dbReference type="PDBsum" id="8IE3"/>
<dbReference type="PDBsum" id="8IFD"/>
<dbReference type="PDBsum" id="8IFE"/>
<dbReference type="PDBsum" id="8INE"/>
<dbReference type="PDBsum" id="8INF"/>
<dbReference type="PDBsum" id="8INK"/>
<dbReference type="PDBsum" id="8IPD"/>
<dbReference type="PDBsum" id="8IPX"/>
<dbReference type="PDBsum" id="8IPY"/>
<dbReference type="PDBsum" id="8JDJ"/>
<dbReference type="PDBsum" id="8JDK"/>
<dbReference type="PDBsum" id="8JDL"/>
<dbReference type="PDBsum" id="8JDM"/>
<dbReference type="PDBsum" id="8K2C"/>
<dbReference type="PDBsum" id="8OHD"/>
<dbReference type="PDBsum" id="8OJ0"/>
<dbReference type="PDBsum" id="8OJ5"/>
<dbReference type="PDBsum" id="8OJ8"/>
<dbReference type="PDBsum" id="8QFD"/>
<dbReference type="PDBsum" id="8QOI"/>
<dbReference type="PDBsum" id="8QYX"/>
<dbReference type="PDBsum" id="8UKB"/>
<dbReference type="PDBsum" id="8XSX"/>
<dbReference type="PDBsum" id="8XSY"/>
<dbReference type="PDBsum" id="8XSZ"/>
<dbReference type="PDBsum" id="8Y0W"/>
<dbReference type="PDBsum" id="8Y0X"/>
<dbReference type="PDBsum" id="8YOO"/>
<dbReference type="PDBsum" id="8YOP"/>
<dbReference type="PDBsum" id="9C3H"/>
<dbReference type="PDBsum" id="9G8M"/>
<dbReference type="PDBsum" id="9GMO"/>
<dbReference type="EMDB" id="EMD-0948"/>
<dbReference type="EMDB" id="EMD-0963"/>
<dbReference type="EMDB" id="EMD-0964"/>
<dbReference type="EMDB" id="EMD-0978"/>
<dbReference type="EMDB" id="EMD-10668"/>
<dbReference type="EMDB" id="EMD-10674"/>
<dbReference type="EMDB" id="EMD-10690"/>
<dbReference type="EMDB" id="EMD-10709"/>
<dbReference type="EMDB" id="EMD-11098"/>
<dbReference type="EMDB" id="EMD-11099"/>
<dbReference type="EMDB" id="EMD-11100"/>
<dbReference type="EMDB" id="EMD-11288"/>
<dbReference type="EMDB" id="EMD-11289"/>
<dbReference type="EMDB" id="EMD-11292"/>
<dbReference type="EMDB" id="EMD-11299"/>
<dbReference type="EMDB" id="EMD-12189"/>
<dbReference type="EMDB" id="EMD-13094"/>
<dbReference type="EMDB" id="EMD-14181"/>
<dbReference type="EMDB" id="EMD-15113"/>
<dbReference type="EMDB" id="EMD-16880"/>
<dbReference type="EMDB" id="EMD-16902"/>
<dbReference type="EMDB" id="EMD-16905"/>
<dbReference type="EMDB" id="EMD-16908"/>
<dbReference type="EMDB" id="EMD-18382"/>
<dbReference type="EMDB" id="EMD-18539"/>
<dbReference type="EMDB" id="EMD-18765"/>
<dbReference type="EMDB" id="EMD-29268"/>
<dbReference type="EMDB" id="EMD-29269"/>
<dbReference type="EMDB" id="EMD-29271"/>
<dbReference type="EMDB" id="EMD-29272"/>
<dbReference type="EMDB" id="EMD-29273"/>
<dbReference type="EMDB" id="EMD-29274"/>
<dbReference type="EMDB" id="EMD-29275"/>
<dbReference type="EMDB" id="EMD-29276"/>
<dbReference type="EMDB" id="EMD-29277"/>
<dbReference type="EMDB" id="EMD-29757"/>
<dbReference type="EMDB" id="EMD-29758"/>
<dbReference type="EMDB" id="EMD-29759"/>
<dbReference type="EMDB" id="EMD-29760"/>
<dbReference type="EMDB" id="EMD-29771"/>
<dbReference type="EMDB" id="EMD-31465"/>
<dbReference type="EMDB" id="EMD-33329"/>
<dbReference type="EMDB" id="EMD-33330"/>
<dbReference type="EMDB" id="EMD-35370"/>
<dbReference type="EMDB" id="EMD-35371"/>
<dbReference type="EMDB" id="EMD-35375"/>
<dbReference type="EMDB" id="EMD-35413"/>
<dbReference type="EMDB" id="EMD-35414"/>
<dbReference type="EMDB" id="EMD-35596"/>
<dbReference type="EMDB" id="EMD-35597"/>
<dbReference type="EMDB" id="EMD-35599"/>
<dbReference type="EMDB" id="EMD-35639"/>
<dbReference type="EMDB" id="EMD-35649"/>
<dbReference type="EMDB" id="EMD-35651"/>
<dbReference type="EMDB" id="EMD-36178"/>
<dbReference type="EMDB" id="EMD-36179"/>
<dbReference type="EMDB" id="EMD-36180"/>
<dbReference type="EMDB" id="EMD-36181"/>
<dbReference type="EMDB" id="EMD-36838"/>
<dbReference type="EMDB" id="EMD-38629"/>
<dbReference type="EMDB" id="EMD-38630"/>
<dbReference type="EMDB" id="EMD-38631"/>
<dbReference type="EMDB" id="EMD-3883"/>
<dbReference type="EMDB" id="EMD-39455"/>
<dbReference type="EMDB" id="EMD-39456"/>
<dbReference type="EMDB" id="EMD-40205"/>
<dbReference type="EMDB" id="EMD-42351"/>
<dbReference type="EMDB" id="EMD-45170"/>
<dbReference type="EMDB" id="EMD-51132"/>
<dbReference type="EMDB" id="EMD-51452"/>
<dbReference type="EMDB" id="EMD-9701"/>
<dbReference type="EMDB" id="EMD-9702"/>
<dbReference type="EMDB" id="EMD-9703"/>
<dbReference type="SMR" id="P47914"/>
<dbReference type="BioGRID" id="112078">
    <property type="interactions" value="379"/>
</dbReference>
<dbReference type="ComplexPortal" id="CPX-5183">
    <property type="entry name" value="60S cytosolic large ribosomal subunit"/>
</dbReference>
<dbReference type="ComplexPortal" id="CPX-7664">
    <property type="entry name" value="60S cytosolic large ribosomal subunit, testis-specific variant"/>
</dbReference>
<dbReference type="ComplexPortal" id="CPX-7665">
    <property type="entry name" value="60S cytosolic large ribosomal subunit, striated muscle variant"/>
</dbReference>
<dbReference type="CORUM" id="P47914"/>
<dbReference type="FunCoup" id="P47914">
    <property type="interactions" value="823"/>
</dbReference>
<dbReference type="IntAct" id="P47914">
    <property type="interactions" value="91"/>
</dbReference>
<dbReference type="MINT" id="P47914"/>
<dbReference type="STRING" id="9606.ENSP00000294189"/>
<dbReference type="GlyGen" id="P47914">
    <property type="glycosylation" value="4 sites, 1 O-linked glycan (4 sites)"/>
</dbReference>
<dbReference type="iPTMnet" id="P47914"/>
<dbReference type="PhosphoSitePlus" id="P47914"/>
<dbReference type="SwissPalm" id="P47914"/>
<dbReference type="BioMuta" id="RPL29"/>
<dbReference type="jPOST" id="P47914"/>
<dbReference type="MassIVE" id="P47914"/>
<dbReference type="PaxDb" id="9606-ENSP00000418868"/>
<dbReference type="PeptideAtlas" id="P47914"/>
<dbReference type="ProteomicsDB" id="55822"/>
<dbReference type="Pumba" id="P47914"/>
<dbReference type="TopDownProteomics" id="P47914"/>
<dbReference type="Antibodypedia" id="31146">
    <property type="antibodies" value="74 antibodies from 23 providers"/>
</dbReference>
<dbReference type="DNASU" id="6159"/>
<dbReference type="Ensembl" id="ENST00000294189.11">
    <property type="protein sequence ID" value="ENSP00000294189.4"/>
    <property type="gene ID" value="ENSG00000162244.12"/>
</dbReference>
<dbReference type="Ensembl" id="ENST00000466397.5">
    <property type="protein sequence ID" value="ENSP00000418868.1"/>
    <property type="gene ID" value="ENSG00000162244.12"/>
</dbReference>
<dbReference type="Ensembl" id="ENST00000475248.5">
    <property type="protein sequence ID" value="ENSP00000417048.1"/>
    <property type="gene ID" value="ENSG00000162244.12"/>
</dbReference>
<dbReference type="Ensembl" id="ENST00000479017.5">
    <property type="protein sequence ID" value="ENSP00000418153.1"/>
    <property type="gene ID" value="ENSG00000162244.12"/>
</dbReference>
<dbReference type="Ensembl" id="ENST00000492277.5">
    <property type="protein sequence ID" value="ENSP00000418346.1"/>
    <property type="gene ID" value="ENSG00000162244.12"/>
</dbReference>
<dbReference type="Ensembl" id="ENST00000495383.5">
    <property type="protein sequence ID" value="ENSP00000420673.1"/>
    <property type="gene ID" value="ENSG00000162244.12"/>
</dbReference>
<dbReference type="GeneID" id="6159"/>
<dbReference type="KEGG" id="hsa:6159"/>
<dbReference type="MANE-Select" id="ENST00000294189.11">
    <property type="protein sequence ID" value="ENSP00000294189.4"/>
    <property type="RefSeq nucleotide sequence ID" value="NM_000992.3"/>
    <property type="RefSeq protein sequence ID" value="NP_000983.1"/>
</dbReference>
<dbReference type="UCSC" id="uc003dcs.4">
    <property type="organism name" value="human"/>
</dbReference>
<dbReference type="AGR" id="HGNC:10331"/>
<dbReference type="CTD" id="6159"/>
<dbReference type="DisGeNET" id="6159"/>
<dbReference type="GeneCards" id="RPL29"/>
<dbReference type="HGNC" id="HGNC:10331">
    <property type="gene designation" value="RPL29"/>
</dbReference>
<dbReference type="HPA" id="ENSG00000162244">
    <property type="expression patterns" value="Low tissue specificity"/>
</dbReference>
<dbReference type="MIM" id="601832">
    <property type="type" value="gene"/>
</dbReference>
<dbReference type="neXtProt" id="NX_P47914"/>
<dbReference type="OpenTargets" id="ENSG00000162244"/>
<dbReference type="PharmGKB" id="PA34711"/>
<dbReference type="VEuPathDB" id="HostDB:ENSG00000162244"/>
<dbReference type="eggNOG" id="KOG3504">
    <property type="taxonomic scope" value="Eukaryota"/>
</dbReference>
<dbReference type="GeneTree" id="ENSGT00390000007084"/>
<dbReference type="HOGENOM" id="CLU_139508_0_0_1"/>
<dbReference type="InParanoid" id="P47914"/>
<dbReference type="OMA" id="LISGHHY"/>
<dbReference type="OrthoDB" id="9537968at2759"/>
<dbReference type="PAN-GO" id="P47914">
    <property type="GO annotations" value="3 GO annotations based on evolutionary models"/>
</dbReference>
<dbReference type="PhylomeDB" id="P47914"/>
<dbReference type="TreeFam" id="TF313858"/>
<dbReference type="PathwayCommons" id="P47914"/>
<dbReference type="Reactome" id="R-HSA-156827">
    <property type="pathway name" value="L13a-mediated translational silencing of Ceruloplasmin expression"/>
</dbReference>
<dbReference type="Reactome" id="R-HSA-156902">
    <property type="pathway name" value="Peptide chain elongation"/>
</dbReference>
<dbReference type="Reactome" id="R-HSA-1799339">
    <property type="pathway name" value="SRP-dependent cotranslational protein targeting to membrane"/>
</dbReference>
<dbReference type="Reactome" id="R-HSA-192823">
    <property type="pathway name" value="Viral mRNA Translation"/>
</dbReference>
<dbReference type="Reactome" id="R-HSA-2408557">
    <property type="pathway name" value="Selenocysteine synthesis"/>
</dbReference>
<dbReference type="Reactome" id="R-HSA-6791226">
    <property type="pathway name" value="Major pathway of rRNA processing in the nucleolus and cytosol"/>
</dbReference>
<dbReference type="Reactome" id="R-HSA-72689">
    <property type="pathway name" value="Formation of a pool of free 40S subunits"/>
</dbReference>
<dbReference type="Reactome" id="R-HSA-72706">
    <property type="pathway name" value="GTP hydrolysis and joining of the 60S ribosomal subunit"/>
</dbReference>
<dbReference type="Reactome" id="R-HSA-72764">
    <property type="pathway name" value="Eukaryotic Translation Termination"/>
</dbReference>
<dbReference type="Reactome" id="R-HSA-9010553">
    <property type="pathway name" value="Regulation of expression of SLITs and ROBOs"/>
</dbReference>
<dbReference type="Reactome" id="R-HSA-9633012">
    <property type="pathway name" value="Response of EIF2AK4 (GCN2) to amino acid deficiency"/>
</dbReference>
<dbReference type="Reactome" id="R-HSA-975956">
    <property type="pathway name" value="Nonsense Mediated Decay (NMD) independent of the Exon Junction Complex (EJC)"/>
</dbReference>
<dbReference type="Reactome" id="R-HSA-975957">
    <property type="pathway name" value="Nonsense Mediated Decay (NMD) enhanced by the Exon Junction Complex (EJC)"/>
</dbReference>
<dbReference type="SignaLink" id="P47914"/>
<dbReference type="SIGNOR" id="P47914"/>
<dbReference type="BioGRID-ORCS" id="6159">
    <property type="hits" value="304 hits in 1089 CRISPR screens"/>
</dbReference>
<dbReference type="CD-CODE" id="91857CE7">
    <property type="entry name" value="Nucleolus"/>
</dbReference>
<dbReference type="ChiTaRS" id="RPL29">
    <property type="organism name" value="human"/>
</dbReference>
<dbReference type="GeneWiki" id="RPL29"/>
<dbReference type="GenomeRNAi" id="6159"/>
<dbReference type="Pharos" id="P47914">
    <property type="development level" value="Tbio"/>
</dbReference>
<dbReference type="PRO" id="PR:P47914"/>
<dbReference type="Proteomes" id="UP000005640">
    <property type="component" value="Chromosome 3"/>
</dbReference>
<dbReference type="RNAct" id="P47914">
    <property type="molecule type" value="protein"/>
</dbReference>
<dbReference type="Bgee" id="ENSG00000162244">
    <property type="expression patterns" value="Expressed in stromal cell of endometrium and 110 other cell types or tissues"/>
</dbReference>
<dbReference type="ExpressionAtlas" id="P47914">
    <property type="expression patterns" value="baseline and differential"/>
</dbReference>
<dbReference type="GO" id="GO:0005737">
    <property type="term" value="C:cytoplasm"/>
    <property type="evidence" value="ECO:0000303"/>
    <property type="project" value="ComplexPortal"/>
</dbReference>
<dbReference type="GO" id="GO:0005829">
    <property type="term" value="C:cytosol"/>
    <property type="evidence" value="ECO:0000304"/>
    <property type="project" value="Reactome"/>
</dbReference>
<dbReference type="GO" id="GO:0022625">
    <property type="term" value="C:cytosolic large ribosomal subunit"/>
    <property type="evidence" value="ECO:0000314"/>
    <property type="project" value="UniProtKB"/>
</dbReference>
<dbReference type="GO" id="GO:0022626">
    <property type="term" value="C:cytosolic ribosome"/>
    <property type="evidence" value="ECO:0000314"/>
    <property type="project" value="FlyBase"/>
</dbReference>
<dbReference type="GO" id="GO:0016020">
    <property type="term" value="C:membrane"/>
    <property type="evidence" value="ECO:0007005"/>
    <property type="project" value="UniProtKB"/>
</dbReference>
<dbReference type="GO" id="GO:0045296">
    <property type="term" value="F:cadherin binding"/>
    <property type="evidence" value="ECO:0007005"/>
    <property type="project" value="BHF-UCL"/>
</dbReference>
<dbReference type="GO" id="GO:0008201">
    <property type="term" value="F:heparin binding"/>
    <property type="evidence" value="ECO:0000304"/>
    <property type="project" value="ProtInc"/>
</dbReference>
<dbReference type="GO" id="GO:0003723">
    <property type="term" value="F:RNA binding"/>
    <property type="evidence" value="ECO:0007005"/>
    <property type="project" value="UniProtKB"/>
</dbReference>
<dbReference type="GO" id="GO:0003735">
    <property type="term" value="F:structural constituent of ribosome"/>
    <property type="evidence" value="ECO:0000314"/>
    <property type="project" value="UniProtKB"/>
</dbReference>
<dbReference type="GO" id="GO:0002181">
    <property type="term" value="P:cytoplasmic translation"/>
    <property type="evidence" value="ECO:0000318"/>
    <property type="project" value="GO_Central"/>
</dbReference>
<dbReference type="GO" id="GO:0007566">
    <property type="term" value="P:embryo implantation"/>
    <property type="evidence" value="ECO:0000304"/>
    <property type="project" value="ProtInc"/>
</dbReference>
<dbReference type="GO" id="GO:0006412">
    <property type="term" value="P:translation"/>
    <property type="evidence" value="ECO:0000304"/>
    <property type="project" value="ProtInc"/>
</dbReference>
<dbReference type="Gene3D" id="6.10.140.1730">
    <property type="match status" value="1"/>
</dbReference>
<dbReference type="InterPro" id="IPR002673">
    <property type="entry name" value="Ribosomal_eL29"/>
</dbReference>
<dbReference type="PANTHER" id="PTHR12884">
    <property type="entry name" value="60S RIBOSOMAL PROTEIN L29"/>
    <property type="match status" value="1"/>
</dbReference>
<dbReference type="PANTHER" id="PTHR12884:SF18">
    <property type="entry name" value="60S RIBOSOMAL PROTEIN L29"/>
    <property type="match status" value="1"/>
</dbReference>
<dbReference type="Pfam" id="PF01779">
    <property type="entry name" value="Ribosomal_L29e"/>
    <property type="match status" value="1"/>
</dbReference>
<evidence type="ECO:0000256" key="1">
    <source>
        <dbReference type="SAM" id="MobiDB-lite"/>
    </source>
</evidence>
<evidence type="ECO:0000269" key="2">
    <source>
    </source>
</evidence>
<evidence type="ECO:0000269" key="3">
    <source>
    </source>
</evidence>
<evidence type="ECO:0000269" key="4">
    <source>
    </source>
</evidence>
<evidence type="ECO:0000303" key="5">
    <source>
    </source>
</evidence>
<evidence type="ECO:0000305" key="6"/>
<evidence type="ECO:0000305" key="7">
    <source>
    </source>
</evidence>
<evidence type="ECO:0007744" key="8">
    <source>
        <dbReference type="PDB" id="6LQM"/>
    </source>
</evidence>
<evidence type="ECO:0007744" key="9">
    <source>
        <dbReference type="PDB" id="6LSR"/>
    </source>
</evidence>
<evidence type="ECO:0007744" key="10">
    <source>
        <dbReference type="PDB" id="6LSS"/>
    </source>
</evidence>
<evidence type="ECO:0007744" key="11">
    <source>
        <dbReference type="PDB" id="6LU8"/>
    </source>
</evidence>
<evidence type="ECO:0007744" key="12">
    <source>
    </source>
</evidence>
<evidence type="ECO:0007744" key="13">
    <source>
    </source>
</evidence>
<evidence type="ECO:0007744" key="14">
    <source>
    </source>
</evidence>
<evidence type="ECO:0007744" key="15">
    <source>
    </source>
</evidence>
<evidence type="ECO:0007744" key="16">
    <source>
    </source>
</evidence>
<protein>
    <recommendedName>
        <fullName evidence="5">Large ribosomal subunit protein eL29</fullName>
    </recommendedName>
    <alternativeName>
        <fullName>60S ribosomal protein L29</fullName>
    </alternativeName>
    <alternativeName>
        <fullName>Cell surface heparin-binding protein HIP</fullName>
    </alternativeName>
</protein>
<accession>P47914</accession>
<accession>A8K0H3</accession>
<accession>B2R4M8</accession>
<accession>Q6IPY3</accession>
<name>RL29_HUMAN</name>
<gene>
    <name type="primary">RPL29</name>
</gene>
<feature type="initiator methionine" description="Removed" evidence="2">
    <location>
        <position position="1"/>
    </location>
</feature>
<feature type="chain" id="PRO_0000219134" description="Large ribosomal subunit protein eL29">
    <location>
        <begin position="2"/>
        <end position="159"/>
    </location>
</feature>
<feature type="region of interest" description="Disordered" evidence="1">
    <location>
        <begin position="1"/>
        <end position="32"/>
    </location>
</feature>
<feature type="region of interest" description="Disordered" evidence="1">
    <location>
        <begin position="117"/>
        <end position="159"/>
    </location>
</feature>
<feature type="compositionally biased region" description="Basic residues" evidence="1">
    <location>
        <begin position="1"/>
        <end position="26"/>
    </location>
</feature>
<feature type="compositionally biased region" description="Basic residues" evidence="1">
    <location>
        <begin position="117"/>
        <end position="127"/>
    </location>
</feature>
<feature type="compositionally biased region" description="Low complexity" evidence="1">
    <location>
        <begin position="134"/>
        <end position="149"/>
    </location>
</feature>
<feature type="modified residue" description="N6-methyllysine" evidence="2 15">
    <location>
        <position position="5"/>
    </location>
</feature>
<feature type="modified residue" description="Phosphoserine" evidence="14">
    <location>
        <position position="31"/>
    </location>
</feature>
<feature type="modified residue" description="N6-acetyllysine" evidence="12">
    <location>
        <position position="33"/>
    </location>
</feature>
<feature type="modified residue" description="Phosphoserine" evidence="13 14 16">
    <location>
        <position position="142"/>
    </location>
</feature>
<feature type="sequence conflict" description="In Ref. 4; BAF82227." evidence="6" ref="4">
    <original>K</original>
    <variation>R</variation>
    <location>
        <position position="5"/>
    </location>
</feature>
<feature type="sequence conflict" description="In Ref. 2; CAA89008." evidence="6" ref="2">
    <original>R</original>
    <variation>A</variation>
    <location>
        <position position="120"/>
    </location>
</feature>
<proteinExistence type="evidence at protein level"/>
<comment type="function">
    <text evidence="3 4 7">Component of the large ribosomal subunit (PubMed:12962325, PubMed:23636399, PubMed:32669547). The ribosome is a large ribonucleoprotein complex responsible for the synthesis of proteins in the cell (PubMed:12962325, PubMed:23636399, PubMed:32669547).</text>
</comment>
<comment type="subunit">
    <text evidence="3 4 7">Component of the large ribosomal subunit (PubMed:12962325, PubMed:23636399, PubMed:32669547).</text>
</comment>
<comment type="subcellular location">
    <subcellularLocation>
        <location evidence="3">Cytoplasm</location>
    </subcellularLocation>
</comment>
<comment type="similarity">
    <text evidence="6">Belongs to the eukaryotic ribosomal protein eL29 family.</text>
</comment>